<accession>Q8ZLJ2</accession>
<name>GREB_SALTY</name>
<comment type="function">
    <text evidence="1">Necessary for efficient RNA polymerase transcription elongation past template-encoded arresting sites. The arresting sites in DNA have the property of trapping a certain fraction of elongating RNA polymerases that pass through, resulting in locked ternary complexes. Cleavage of the nascent transcript by cleavage factors such as GreA or GreB allows the resumption of elongation from the new 3'terminus. GreB releases sequences of up to 9 nucleotides in length.</text>
</comment>
<comment type="similarity">
    <text evidence="1">Belongs to the GreA/GreB family. GreB subfamily.</text>
</comment>
<sequence>MKTPLITREGYETLKQELNYLWREERPEVTKKVTWAASLGDRSENADYQYNKKRLREIDRRVRYLTKCMENLKIVDYSPQQEGKVFFGAWVEIENDDGDRLKFRIVGYDEIFGRKDYISIDSPMARALLKKEVGDLAVVNTPVGEANWYVNAIEYVK</sequence>
<evidence type="ECO:0000255" key="1">
    <source>
        <dbReference type="HAMAP-Rule" id="MF_00930"/>
    </source>
</evidence>
<proteinExistence type="inferred from homology"/>
<gene>
    <name evidence="1" type="primary">greB</name>
    <name type="ordered locus">STM3503</name>
</gene>
<keyword id="KW-0238">DNA-binding</keyword>
<keyword id="KW-1185">Reference proteome</keyword>
<keyword id="KW-0804">Transcription</keyword>
<keyword id="KW-0805">Transcription regulation</keyword>
<dbReference type="EMBL" id="AE006468">
    <property type="protein sequence ID" value="AAL22365.1"/>
    <property type="molecule type" value="Genomic_DNA"/>
</dbReference>
<dbReference type="RefSeq" id="NP_462406.1">
    <property type="nucleotide sequence ID" value="NC_003197.2"/>
</dbReference>
<dbReference type="RefSeq" id="WP_000856693.1">
    <property type="nucleotide sequence ID" value="NC_003197.2"/>
</dbReference>
<dbReference type="SMR" id="Q8ZLJ2"/>
<dbReference type="STRING" id="99287.STM3503"/>
<dbReference type="PaxDb" id="99287-STM3503"/>
<dbReference type="GeneID" id="1255026"/>
<dbReference type="KEGG" id="stm:STM3503"/>
<dbReference type="PATRIC" id="fig|99287.12.peg.3702"/>
<dbReference type="HOGENOM" id="CLU_101379_3_0_6"/>
<dbReference type="OMA" id="DEIYGRN"/>
<dbReference type="PhylomeDB" id="Q8ZLJ2"/>
<dbReference type="BioCyc" id="SENT99287:STM3503-MONOMER"/>
<dbReference type="PHI-base" id="PHI:7131"/>
<dbReference type="Proteomes" id="UP000001014">
    <property type="component" value="Chromosome"/>
</dbReference>
<dbReference type="GO" id="GO:0003677">
    <property type="term" value="F:DNA binding"/>
    <property type="evidence" value="ECO:0007669"/>
    <property type="project" value="UniProtKB-UniRule"/>
</dbReference>
<dbReference type="GO" id="GO:0070063">
    <property type="term" value="F:RNA polymerase binding"/>
    <property type="evidence" value="ECO:0007669"/>
    <property type="project" value="InterPro"/>
</dbReference>
<dbReference type="GO" id="GO:0006354">
    <property type="term" value="P:DNA-templated transcription elongation"/>
    <property type="evidence" value="ECO:0000318"/>
    <property type="project" value="GO_Central"/>
</dbReference>
<dbReference type="GO" id="GO:0032784">
    <property type="term" value="P:regulation of DNA-templated transcription elongation"/>
    <property type="evidence" value="ECO:0007669"/>
    <property type="project" value="UniProtKB-UniRule"/>
</dbReference>
<dbReference type="FunFam" id="1.10.287.180:FF:000001">
    <property type="entry name" value="Transcription elongation factor GreA"/>
    <property type="match status" value="1"/>
</dbReference>
<dbReference type="FunFam" id="3.10.50.30:FF:000001">
    <property type="entry name" value="Transcription elongation factor GreA"/>
    <property type="match status" value="1"/>
</dbReference>
<dbReference type="Gene3D" id="3.10.50.30">
    <property type="entry name" value="Transcription elongation factor, GreA/GreB, C-terminal domain"/>
    <property type="match status" value="1"/>
</dbReference>
<dbReference type="Gene3D" id="1.10.287.180">
    <property type="entry name" value="Transcription elongation factor, GreA/GreB, N-terminal domain"/>
    <property type="match status" value="1"/>
</dbReference>
<dbReference type="HAMAP" id="MF_00105">
    <property type="entry name" value="GreA_GreB"/>
    <property type="match status" value="1"/>
</dbReference>
<dbReference type="HAMAP" id="MF_00930">
    <property type="entry name" value="GreB"/>
    <property type="match status" value="1"/>
</dbReference>
<dbReference type="InterPro" id="IPR036953">
    <property type="entry name" value="GreA/GreB_C_sf"/>
</dbReference>
<dbReference type="InterPro" id="IPR018151">
    <property type="entry name" value="TF_GreA/GreB_CS"/>
</dbReference>
<dbReference type="InterPro" id="IPR028624">
    <property type="entry name" value="Tscrpt_elong_fac_GreA/B"/>
</dbReference>
<dbReference type="InterPro" id="IPR001437">
    <property type="entry name" value="Tscrpt_elong_fac_GreA/B_C"/>
</dbReference>
<dbReference type="InterPro" id="IPR023459">
    <property type="entry name" value="Tscrpt_elong_fac_GreA/B_fam"/>
</dbReference>
<dbReference type="InterPro" id="IPR022691">
    <property type="entry name" value="Tscrpt_elong_fac_GreA/B_N"/>
</dbReference>
<dbReference type="InterPro" id="IPR036805">
    <property type="entry name" value="Tscrpt_elong_fac_GreA/B_N_sf"/>
</dbReference>
<dbReference type="InterPro" id="IPR006358">
    <property type="entry name" value="Tscrpt_elong_fac_GreB"/>
</dbReference>
<dbReference type="NCBIfam" id="TIGR01461">
    <property type="entry name" value="greB"/>
    <property type="match status" value="1"/>
</dbReference>
<dbReference type="NCBIfam" id="NF002506">
    <property type="entry name" value="PRK01885.1"/>
    <property type="match status" value="1"/>
</dbReference>
<dbReference type="PANTHER" id="PTHR30437">
    <property type="entry name" value="TRANSCRIPTION ELONGATION FACTOR GREA"/>
    <property type="match status" value="1"/>
</dbReference>
<dbReference type="PANTHER" id="PTHR30437:SF6">
    <property type="entry name" value="TRANSCRIPTION ELONGATION FACTOR GREB"/>
    <property type="match status" value="1"/>
</dbReference>
<dbReference type="Pfam" id="PF01272">
    <property type="entry name" value="GreA_GreB"/>
    <property type="match status" value="1"/>
</dbReference>
<dbReference type="Pfam" id="PF03449">
    <property type="entry name" value="GreA_GreB_N"/>
    <property type="match status" value="1"/>
</dbReference>
<dbReference type="PIRSF" id="PIRSF006092">
    <property type="entry name" value="GreA_GreB"/>
    <property type="match status" value="1"/>
</dbReference>
<dbReference type="SUPFAM" id="SSF54534">
    <property type="entry name" value="FKBP-like"/>
    <property type="match status" value="1"/>
</dbReference>
<dbReference type="SUPFAM" id="SSF46557">
    <property type="entry name" value="GreA transcript cleavage protein, N-terminal domain"/>
    <property type="match status" value="1"/>
</dbReference>
<dbReference type="PROSITE" id="PS00829">
    <property type="entry name" value="GREAB_1"/>
    <property type="match status" value="1"/>
</dbReference>
<dbReference type="PROSITE" id="PS00830">
    <property type="entry name" value="GREAB_2"/>
    <property type="match status" value="1"/>
</dbReference>
<protein>
    <recommendedName>
        <fullName evidence="1">Transcription elongation factor GreB</fullName>
    </recommendedName>
    <alternativeName>
        <fullName evidence="1">Transcript cleavage factor GreB</fullName>
    </alternativeName>
</protein>
<reference key="1">
    <citation type="journal article" date="2001" name="Nature">
        <title>Complete genome sequence of Salmonella enterica serovar Typhimurium LT2.</title>
        <authorList>
            <person name="McClelland M."/>
            <person name="Sanderson K.E."/>
            <person name="Spieth J."/>
            <person name="Clifton S.W."/>
            <person name="Latreille P."/>
            <person name="Courtney L."/>
            <person name="Porwollik S."/>
            <person name="Ali J."/>
            <person name="Dante M."/>
            <person name="Du F."/>
            <person name="Hou S."/>
            <person name="Layman D."/>
            <person name="Leonard S."/>
            <person name="Nguyen C."/>
            <person name="Scott K."/>
            <person name="Holmes A."/>
            <person name="Grewal N."/>
            <person name="Mulvaney E."/>
            <person name="Ryan E."/>
            <person name="Sun H."/>
            <person name="Florea L."/>
            <person name="Miller W."/>
            <person name="Stoneking T."/>
            <person name="Nhan M."/>
            <person name="Waterston R."/>
            <person name="Wilson R.K."/>
        </authorList>
    </citation>
    <scope>NUCLEOTIDE SEQUENCE [LARGE SCALE GENOMIC DNA]</scope>
    <source>
        <strain>LT2 / SGSC1412 / ATCC 700720</strain>
    </source>
</reference>
<organism>
    <name type="scientific">Salmonella typhimurium (strain LT2 / SGSC1412 / ATCC 700720)</name>
    <dbReference type="NCBI Taxonomy" id="99287"/>
    <lineage>
        <taxon>Bacteria</taxon>
        <taxon>Pseudomonadati</taxon>
        <taxon>Pseudomonadota</taxon>
        <taxon>Gammaproteobacteria</taxon>
        <taxon>Enterobacterales</taxon>
        <taxon>Enterobacteriaceae</taxon>
        <taxon>Salmonella</taxon>
    </lineage>
</organism>
<feature type="chain" id="PRO_0000176968" description="Transcription elongation factor GreB">
    <location>
        <begin position="1"/>
        <end position="157"/>
    </location>
</feature>